<evidence type="ECO:0000255" key="1">
    <source>
        <dbReference type="HAMAP-Rule" id="MF_00185"/>
    </source>
</evidence>
<name>MIAA_CAUSK</name>
<gene>
    <name evidence="1" type="primary">miaA</name>
    <name type="ordered locus">Caul_3349</name>
</gene>
<protein>
    <recommendedName>
        <fullName evidence="1">tRNA dimethylallyltransferase</fullName>
        <ecNumber evidence="1">2.5.1.75</ecNumber>
    </recommendedName>
    <alternativeName>
        <fullName evidence="1">Dimethylallyl diphosphate:tRNA dimethylallyltransferase</fullName>
        <shortName evidence="1">DMAPP:tRNA dimethylallyltransferase</shortName>
        <shortName evidence="1">DMATase</shortName>
    </alternativeName>
    <alternativeName>
        <fullName evidence="1">Isopentenyl-diphosphate:tRNA isopentenyltransferase</fullName>
        <shortName evidence="1">IPP transferase</shortName>
        <shortName evidence="1">IPPT</shortName>
        <shortName evidence="1">IPTase</shortName>
    </alternativeName>
</protein>
<sequence>MPDTKIVLIAGPTASGKSALALKMARETGGEIVNADSMQIYGGLPVLTAAPSPEELAQAPHHLFGAVDAADAWSVGKWLAAATAVLDDIAARDRTAIVVGGTGLYFRALTHGLADIPPVSETQREVSALLYAAQGEPEFRDVLAALDPEAEARIEIGDRQRLLRAHAVAIATGKSLTAWQTDTKPTLADGTWTGLVLDPPRAQLYDRCDARLGLMVERGALDEVRAMEARGLEPALPALKALGYRELAAHLRGETSLDQALDAARQETRRYAKRQMTWFRNQTPDWERVETLAPYGSLRDRLPPEGEEP</sequence>
<proteinExistence type="inferred from homology"/>
<organism>
    <name type="scientific">Caulobacter sp. (strain K31)</name>
    <dbReference type="NCBI Taxonomy" id="366602"/>
    <lineage>
        <taxon>Bacteria</taxon>
        <taxon>Pseudomonadati</taxon>
        <taxon>Pseudomonadota</taxon>
        <taxon>Alphaproteobacteria</taxon>
        <taxon>Caulobacterales</taxon>
        <taxon>Caulobacteraceae</taxon>
        <taxon>Caulobacter</taxon>
    </lineage>
</organism>
<accession>B0T4U9</accession>
<dbReference type="EC" id="2.5.1.75" evidence="1"/>
<dbReference type="EMBL" id="CP000927">
    <property type="protein sequence ID" value="ABZ72476.1"/>
    <property type="molecule type" value="Genomic_DNA"/>
</dbReference>
<dbReference type="SMR" id="B0T4U9"/>
<dbReference type="STRING" id="366602.Caul_3349"/>
<dbReference type="KEGG" id="cak:Caul_3349"/>
<dbReference type="eggNOG" id="COG0324">
    <property type="taxonomic scope" value="Bacteria"/>
</dbReference>
<dbReference type="HOGENOM" id="CLU_032616_0_1_5"/>
<dbReference type="OrthoDB" id="9776390at2"/>
<dbReference type="GO" id="GO:0005524">
    <property type="term" value="F:ATP binding"/>
    <property type="evidence" value="ECO:0007669"/>
    <property type="project" value="UniProtKB-UniRule"/>
</dbReference>
<dbReference type="GO" id="GO:0052381">
    <property type="term" value="F:tRNA dimethylallyltransferase activity"/>
    <property type="evidence" value="ECO:0007669"/>
    <property type="project" value="UniProtKB-UniRule"/>
</dbReference>
<dbReference type="GO" id="GO:0006400">
    <property type="term" value="P:tRNA modification"/>
    <property type="evidence" value="ECO:0007669"/>
    <property type="project" value="TreeGrafter"/>
</dbReference>
<dbReference type="Gene3D" id="1.10.20.140">
    <property type="match status" value="1"/>
</dbReference>
<dbReference type="Gene3D" id="3.40.50.300">
    <property type="entry name" value="P-loop containing nucleotide triphosphate hydrolases"/>
    <property type="match status" value="1"/>
</dbReference>
<dbReference type="HAMAP" id="MF_00185">
    <property type="entry name" value="IPP_trans"/>
    <property type="match status" value="1"/>
</dbReference>
<dbReference type="InterPro" id="IPR039657">
    <property type="entry name" value="Dimethylallyltransferase"/>
</dbReference>
<dbReference type="InterPro" id="IPR018022">
    <property type="entry name" value="IPT"/>
</dbReference>
<dbReference type="InterPro" id="IPR027417">
    <property type="entry name" value="P-loop_NTPase"/>
</dbReference>
<dbReference type="NCBIfam" id="TIGR00174">
    <property type="entry name" value="miaA"/>
    <property type="match status" value="1"/>
</dbReference>
<dbReference type="PANTHER" id="PTHR11088">
    <property type="entry name" value="TRNA DIMETHYLALLYLTRANSFERASE"/>
    <property type="match status" value="1"/>
</dbReference>
<dbReference type="PANTHER" id="PTHR11088:SF60">
    <property type="entry name" value="TRNA DIMETHYLALLYLTRANSFERASE"/>
    <property type="match status" value="1"/>
</dbReference>
<dbReference type="Pfam" id="PF01715">
    <property type="entry name" value="IPPT"/>
    <property type="match status" value="1"/>
</dbReference>
<dbReference type="SUPFAM" id="SSF52540">
    <property type="entry name" value="P-loop containing nucleoside triphosphate hydrolases"/>
    <property type="match status" value="2"/>
</dbReference>
<comment type="function">
    <text evidence="1">Catalyzes the transfer of a dimethylallyl group onto the adenine at position 37 in tRNAs that read codons beginning with uridine, leading to the formation of N6-(dimethylallyl)adenosine (i(6)A).</text>
</comment>
<comment type="catalytic activity">
    <reaction evidence="1">
        <text>adenosine(37) in tRNA + dimethylallyl diphosphate = N(6)-dimethylallyladenosine(37) in tRNA + diphosphate</text>
        <dbReference type="Rhea" id="RHEA:26482"/>
        <dbReference type="Rhea" id="RHEA-COMP:10162"/>
        <dbReference type="Rhea" id="RHEA-COMP:10375"/>
        <dbReference type="ChEBI" id="CHEBI:33019"/>
        <dbReference type="ChEBI" id="CHEBI:57623"/>
        <dbReference type="ChEBI" id="CHEBI:74411"/>
        <dbReference type="ChEBI" id="CHEBI:74415"/>
        <dbReference type="EC" id="2.5.1.75"/>
    </reaction>
</comment>
<comment type="cofactor">
    <cofactor evidence="1">
        <name>Mg(2+)</name>
        <dbReference type="ChEBI" id="CHEBI:18420"/>
    </cofactor>
</comment>
<comment type="subunit">
    <text evidence="1">Monomer.</text>
</comment>
<comment type="similarity">
    <text evidence="1">Belongs to the IPP transferase family.</text>
</comment>
<reference key="1">
    <citation type="submission" date="2008-01" db="EMBL/GenBank/DDBJ databases">
        <title>Complete sequence of chromosome of Caulobacter sp. K31.</title>
        <authorList>
            <consortium name="US DOE Joint Genome Institute"/>
            <person name="Copeland A."/>
            <person name="Lucas S."/>
            <person name="Lapidus A."/>
            <person name="Barry K."/>
            <person name="Glavina del Rio T."/>
            <person name="Dalin E."/>
            <person name="Tice H."/>
            <person name="Pitluck S."/>
            <person name="Bruce D."/>
            <person name="Goodwin L."/>
            <person name="Thompson L.S."/>
            <person name="Brettin T."/>
            <person name="Detter J.C."/>
            <person name="Han C."/>
            <person name="Schmutz J."/>
            <person name="Larimer F."/>
            <person name="Land M."/>
            <person name="Hauser L."/>
            <person name="Kyrpides N."/>
            <person name="Kim E."/>
            <person name="Stephens C."/>
            <person name="Richardson P."/>
        </authorList>
    </citation>
    <scope>NUCLEOTIDE SEQUENCE [LARGE SCALE GENOMIC DNA]</scope>
    <source>
        <strain>K31</strain>
    </source>
</reference>
<feature type="chain" id="PRO_1000077389" description="tRNA dimethylallyltransferase">
    <location>
        <begin position="1"/>
        <end position="309"/>
    </location>
</feature>
<feature type="region of interest" description="Interaction with substrate tRNA" evidence="1">
    <location>
        <begin position="36"/>
        <end position="39"/>
    </location>
</feature>
<feature type="region of interest" description="Interaction with substrate tRNA" evidence="1">
    <location>
        <begin position="160"/>
        <end position="164"/>
    </location>
</feature>
<feature type="binding site" evidence="1">
    <location>
        <begin position="11"/>
        <end position="18"/>
    </location>
    <ligand>
        <name>ATP</name>
        <dbReference type="ChEBI" id="CHEBI:30616"/>
    </ligand>
</feature>
<feature type="binding site" evidence="1">
    <location>
        <begin position="13"/>
        <end position="18"/>
    </location>
    <ligand>
        <name>substrate</name>
    </ligand>
</feature>
<feature type="site" description="Interaction with substrate tRNA" evidence="1">
    <location>
        <position position="102"/>
    </location>
</feature>
<feature type="site" description="Interaction with substrate tRNA" evidence="1">
    <location>
        <position position="124"/>
    </location>
</feature>
<keyword id="KW-0067">ATP-binding</keyword>
<keyword id="KW-0460">Magnesium</keyword>
<keyword id="KW-0547">Nucleotide-binding</keyword>
<keyword id="KW-0808">Transferase</keyword>
<keyword id="KW-0819">tRNA processing</keyword>